<comment type="function">
    <text evidence="1">Catalyzes the conversion of uracil and 5-phospho-alpha-D-ribose 1-diphosphate (PRPP) to UMP and diphosphate.</text>
</comment>
<comment type="catalytic activity">
    <reaction evidence="1">
        <text>UMP + diphosphate = 5-phospho-alpha-D-ribose 1-diphosphate + uracil</text>
        <dbReference type="Rhea" id="RHEA:13017"/>
        <dbReference type="ChEBI" id="CHEBI:17568"/>
        <dbReference type="ChEBI" id="CHEBI:33019"/>
        <dbReference type="ChEBI" id="CHEBI:57865"/>
        <dbReference type="ChEBI" id="CHEBI:58017"/>
        <dbReference type="EC" id="2.4.2.9"/>
    </reaction>
</comment>
<comment type="cofactor">
    <cofactor evidence="1">
        <name>Mg(2+)</name>
        <dbReference type="ChEBI" id="CHEBI:18420"/>
    </cofactor>
    <text evidence="1">Binds 1 Mg(2+) ion per subunit. The magnesium is bound as Mg-PRPP.</text>
</comment>
<comment type="activity regulation">
    <text evidence="1">Allosterically activated by GTP.</text>
</comment>
<comment type="pathway">
    <text evidence="1">Pyrimidine metabolism; UMP biosynthesis via salvage pathway; UMP from uracil: step 1/1.</text>
</comment>
<comment type="similarity">
    <text evidence="1">Belongs to the UPRTase family.</text>
</comment>
<feature type="chain" id="PRO_0000120851" description="Uracil phosphoribosyltransferase">
    <location>
        <begin position="1"/>
        <end position="209"/>
    </location>
</feature>
<feature type="binding site" evidence="1">
    <location>
        <position position="77"/>
    </location>
    <ligand>
        <name>5-phospho-alpha-D-ribose 1-diphosphate</name>
        <dbReference type="ChEBI" id="CHEBI:58017"/>
    </ligand>
</feature>
<feature type="binding site" evidence="1">
    <location>
        <position position="102"/>
    </location>
    <ligand>
        <name>5-phospho-alpha-D-ribose 1-diphosphate</name>
        <dbReference type="ChEBI" id="CHEBI:58017"/>
    </ligand>
</feature>
<feature type="binding site" evidence="1">
    <location>
        <begin position="129"/>
        <end position="137"/>
    </location>
    <ligand>
        <name>5-phospho-alpha-D-ribose 1-diphosphate</name>
        <dbReference type="ChEBI" id="CHEBI:58017"/>
    </ligand>
</feature>
<feature type="binding site" evidence="1">
    <location>
        <position position="192"/>
    </location>
    <ligand>
        <name>uracil</name>
        <dbReference type="ChEBI" id="CHEBI:17568"/>
    </ligand>
</feature>
<feature type="binding site" evidence="1">
    <location>
        <begin position="197"/>
        <end position="199"/>
    </location>
    <ligand>
        <name>uracil</name>
        <dbReference type="ChEBI" id="CHEBI:17568"/>
    </ligand>
</feature>
<feature type="binding site" evidence="1">
    <location>
        <position position="198"/>
    </location>
    <ligand>
        <name>5-phospho-alpha-D-ribose 1-diphosphate</name>
        <dbReference type="ChEBI" id="CHEBI:58017"/>
    </ligand>
</feature>
<evidence type="ECO:0000255" key="1">
    <source>
        <dbReference type="HAMAP-Rule" id="MF_01218"/>
    </source>
</evidence>
<accession>P43049</accession>
<protein>
    <recommendedName>
        <fullName evidence="1">Uracil phosphoribosyltransferase</fullName>
        <ecNumber evidence="1">2.4.2.9</ecNumber>
    </recommendedName>
    <alternativeName>
        <fullName evidence="1">UMP pyrophosphorylase</fullName>
    </alternativeName>
    <alternativeName>
        <fullName evidence="1">UPRTase</fullName>
    </alternativeName>
</protein>
<keyword id="KW-0021">Allosteric enzyme</keyword>
<keyword id="KW-0328">Glycosyltransferase</keyword>
<keyword id="KW-0342">GTP-binding</keyword>
<keyword id="KW-0460">Magnesium</keyword>
<keyword id="KW-0547">Nucleotide-binding</keyword>
<keyword id="KW-0808">Transferase</keyword>
<organism>
    <name type="scientific">Metamycoplasma hominis</name>
    <name type="common">Mycoplasma hominis</name>
    <dbReference type="NCBI Taxonomy" id="2098"/>
    <lineage>
        <taxon>Bacteria</taxon>
        <taxon>Bacillati</taxon>
        <taxon>Mycoplasmatota</taxon>
        <taxon>Mycoplasmoidales</taxon>
        <taxon>Metamycoplasmataceae</taxon>
        <taxon>Metamycoplasma</taxon>
    </lineage>
</organism>
<proteinExistence type="inferred from homology"/>
<reference key="1">
    <citation type="thesis" date="1993" institute="Heinrich-Heine University / Duesseldorf" country="Germany">
        <authorList>
            <person name="Schuchart K."/>
        </authorList>
    </citation>
    <scope>NUCLEOTIDE SEQUENCE [GENOMIC DNA]</scope>
    <source>
        <strain>FBG</strain>
    </source>
</reference>
<sequence>MVKIFQHPLINAKLTTMRSKETSYKDFRDNLNEIASLMVYETLRDYQTKKISITTPMNVKYEGETLDREIVIIPILRAGLGMLNGIMNLVPQARVGHIGMYRNEETNEVVEYFFKIPEVPHDSYIIIVDPMLATGSSACDAIAKLDKLGFNNIKLVCLVGVQQGIDKVTKQFPNVDIYLASKDEKLNEHNYILPGLGDAGDRIFGTKIK</sequence>
<name>UPP_METHO</name>
<dbReference type="EC" id="2.4.2.9" evidence="1"/>
<dbReference type="EMBL" id="Z27121">
    <property type="protein sequence ID" value="CAA81647.1"/>
    <property type="molecule type" value="Genomic_DNA"/>
</dbReference>
<dbReference type="RefSeq" id="WP_175972290.1">
    <property type="nucleotide sequence ID" value="NZ_CP055151.1"/>
</dbReference>
<dbReference type="SMR" id="P43049"/>
<dbReference type="UniPathway" id="UPA00574">
    <property type="reaction ID" value="UER00636"/>
</dbReference>
<dbReference type="GO" id="GO:0005525">
    <property type="term" value="F:GTP binding"/>
    <property type="evidence" value="ECO:0007669"/>
    <property type="project" value="UniProtKB-KW"/>
</dbReference>
<dbReference type="GO" id="GO:0000287">
    <property type="term" value="F:magnesium ion binding"/>
    <property type="evidence" value="ECO:0007669"/>
    <property type="project" value="UniProtKB-UniRule"/>
</dbReference>
<dbReference type="GO" id="GO:0004845">
    <property type="term" value="F:uracil phosphoribosyltransferase activity"/>
    <property type="evidence" value="ECO:0007669"/>
    <property type="project" value="UniProtKB-UniRule"/>
</dbReference>
<dbReference type="GO" id="GO:0044206">
    <property type="term" value="P:UMP salvage"/>
    <property type="evidence" value="ECO:0007669"/>
    <property type="project" value="UniProtKB-UniRule"/>
</dbReference>
<dbReference type="GO" id="GO:0006223">
    <property type="term" value="P:uracil salvage"/>
    <property type="evidence" value="ECO:0007669"/>
    <property type="project" value="InterPro"/>
</dbReference>
<dbReference type="CDD" id="cd06223">
    <property type="entry name" value="PRTases_typeI"/>
    <property type="match status" value="1"/>
</dbReference>
<dbReference type="FunFam" id="3.40.50.2020:FF:000003">
    <property type="entry name" value="Uracil phosphoribosyltransferase"/>
    <property type="match status" value="1"/>
</dbReference>
<dbReference type="Gene3D" id="3.40.50.2020">
    <property type="match status" value="1"/>
</dbReference>
<dbReference type="HAMAP" id="MF_01218_B">
    <property type="entry name" value="Upp_B"/>
    <property type="match status" value="1"/>
</dbReference>
<dbReference type="InterPro" id="IPR000836">
    <property type="entry name" value="PRibTrfase_dom"/>
</dbReference>
<dbReference type="InterPro" id="IPR029057">
    <property type="entry name" value="PRTase-like"/>
</dbReference>
<dbReference type="InterPro" id="IPR034332">
    <property type="entry name" value="Upp_B"/>
</dbReference>
<dbReference type="InterPro" id="IPR050054">
    <property type="entry name" value="UPRTase/APRTase"/>
</dbReference>
<dbReference type="InterPro" id="IPR005765">
    <property type="entry name" value="Ura_phspho_trans"/>
</dbReference>
<dbReference type="NCBIfam" id="NF001097">
    <property type="entry name" value="PRK00129.1"/>
    <property type="match status" value="1"/>
</dbReference>
<dbReference type="NCBIfam" id="TIGR01091">
    <property type="entry name" value="upp"/>
    <property type="match status" value="1"/>
</dbReference>
<dbReference type="PANTHER" id="PTHR32315">
    <property type="entry name" value="ADENINE PHOSPHORIBOSYLTRANSFERASE"/>
    <property type="match status" value="1"/>
</dbReference>
<dbReference type="PANTHER" id="PTHR32315:SF4">
    <property type="entry name" value="URACIL PHOSPHORIBOSYLTRANSFERASE, CHLOROPLASTIC"/>
    <property type="match status" value="1"/>
</dbReference>
<dbReference type="Pfam" id="PF14681">
    <property type="entry name" value="UPRTase"/>
    <property type="match status" value="1"/>
</dbReference>
<dbReference type="SUPFAM" id="SSF53271">
    <property type="entry name" value="PRTase-like"/>
    <property type="match status" value="1"/>
</dbReference>
<gene>
    <name evidence="1" type="primary">upp</name>
</gene>